<comment type="function">
    <text evidence="1">B6-vitamer kinase involved in the salvage pathway of pyridoxal 5'-phosphate (PLP). Catalyzes the phosphorylation of pyridoxine (PN), pyridoxal (PL), and pyridoxamine (PM), forming their respective 5'-phosphorylated esters, i.e. PNP, PLP and PMP.</text>
</comment>
<comment type="catalytic activity">
    <reaction evidence="1">
        <text>pyridoxal + ATP = pyridoxal 5'-phosphate + ADP + H(+)</text>
        <dbReference type="Rhea" id="RHEA:10224"/>
        <dbReference type="ChEBI" id="CHEBI:15378"/>
        <dbReference type="ChEBI" id="CHEBI:17310"/>
        <dbReference type="ChEBI" id="CHEBI:30616"/>
        <dbReference type="ChEBI" id="CHEBI:456216"/>
        <dbReference type="ChEBI" id="CHEBI:597326"/>
        <dbReference type="EC" id="2.7.1.35"/>
    </reaction>
</comment>
<comment type="catalytic activity">
    <reaction evidence="1">
        <text>pyridoxine + ATP = pyridoxine 5'-phosphate + ADP + H(+)</text>
        <dbReference type="Rhea" id="RHEA:25108"/>
        <dbReference type="ChEBI" id="CHEBI:15378"/>
        <dbReference type="ChEBI" id="CHEBI:16709"/>
        <dbReference type="ChEBI" id="CHEBI:30616"/>
        <dbReference type="ChEBI" id="CHEBI:58589"/>
        <dbReference type="ChEBI" id="CHEBI:456216"/>
        <dbReference type="EC" id="2.7.1.35"/>
    </reaction>
</comment>
<comment type="catalytic activity">
    <reaction evidence="1">
        <text>pyridoxamine + ATP = pyridoxamine 5'-phosphate + ADP + H(+)</text>
        <dbReference type="Rhea" id="RHEA:25104"/>
        <dbReference type="ChEBI" id="CHEBI:15378"/>
        <dbReference type="ChEBI" id="CHEBI:30616"/>
        <dbReference type="ChEBI" id="CHEBI:57761"/>
        <dbReference type="ChEBI" id="CHEBI:58451"/>
        <dbReference type="ChEBI" id="CHEBI:456216"/>
        <dbReference type="EC" id="2.7.1.35"/>
    </reaction>
</comment>
<comment type="cofactor">
    <cofactor evidence="1">
        <name>Mg(2+)</name>
        <dbReference type="ChEBI" id="CHEBI:18420"/>
    </cofactor>
</comment>
<comment type="pathway">
    <text evidence="1">Cofactor metabolism; pyridoxal 5'-phosphate salvage; pyridoxal 5'-phosphate from pyridoxal: step 1/1.</text>
</comment>
<comment type="pathway">
    <text evidence="1">Cofactor metabolism; pyridoxal 5'-phosphate salvage; pyridoxine 5'-phosphate from pyridoxine: step 1/1.</text>
</comment>
<comment type="pathway">
    <text evidence="1">Cofactor metabolism; pyridoxal 5'-phosphate salvage; pyridoxamine 5'-phosphate from pyridoxamine: step 1/1.</text>
</comment>
<comment type="subunit">
    <text evidence="1">Homodimer.</text>
</comment>
<comment type="similarity">
    <text evidence="1">Belongs to the pyridoxine kinase family. PdxK subfamily.</text>
</comment>
<reference key="1">
    <citation type="journal article" date="2009" name="PLoS Genet.">
        <title>Organised genome dynamics in the Escherichia coli species results in highly diverse adaptive paths.</title>
        <authorList>
            <person name="Touchon M."/>
            <person name="Hoede C."/>
            <person name="Tenaillon O."/>
            <person name="Barbe V."/>
            <person name="Baeriswyl S."/>
            <person name="Bidet P."/>
            <person name="Bingen E."/>
            <person name="Bonacorsi S."/>
            <person name="Bouchier C."/>
            <person name="Bouvet O."/>
            <person name="Calteau A."/>
            <person name="Chiapello H."/>
            <person name="Clermont O."/>
            <person name="Cruveiller S."/>
            <person name="Danchin A."/>
            <person name="Diard M."/>
            <person name="Dossat C."/>
            <person name="Karoui M.E."/>
            <person name="Frapy E."/>
            <person name="Garry L."/>
            <person name="Ghigo J.M."/>
            <person name="Gilles A.M."/>
            <person name="Johnson J."/>
            <person name="Le Bouguenec C."/>
            <person name="Lescat M."/>
            <person name="Mangenot S."/>
            <person name="Martinez-Jehanne V."/>
            <person name="Matic I."/>
            <person name="Nassif X."/>
            <person name="Oztas S."/>
            <person name="Petit M.A."/>
            <person name="Pichon C."/>
            <person name="Rouy Z."/>
            <person name="Ruf C.S."/>
            <person name="Schneider D."/>
            <person name="Tourret J."/>
            <person name="Vacherie B."/>
            <person name="Vallenet D."/>
            <person name="Medigue C."/>
            <person name="Rocha E.P.C."/>
            <person name="Denamur E."/>
        </authorList>
    </citation>
    <scope>NUCLEOTIDE SEQUENCE [LARGE SCALE GENOMIC DNA]</scope>
    <source>
        <strain>IAI1</strain>
    </source>
</reference>
<proteinExistence type="inferred from homology"/>
<feature type="chain" id="PRO_1000186804" description="Pyridoxine/pyridoxal/pyridoxamine kinase">
    <location>
        <begin position="1"/>
        <end position="283"/>
    </location>
</feature>
<feature type="binding site" evidence="1">
    <location>
        <position position="23"/>
    </location>
    <ligand>
        <name>substrate</name>
    </ligand>
</feature>
<feature type="binding site" evidence="1">
    <location>
        <position position="59"/>
    </location>
    <ligand>
        <name>substrate</name>
    </ligand>
</feature>
<feature type="binding site" evidence="1">
    <location>
        <position position="125"/>
    </location>
    <ligand>
        <name>ATP</name>
        <dbReference type="ChEBI" id="CHEBI:30616"/>
    </ligand>
</feature>
<feature type="binding site" evidence="1">
    <location>
        <position position="136"/>
    </location>
    <ligand>
        <name>Mg(2+)</name>
        <dbReference type="ChEBI" id="CHEBI:18420"/>
    </ligand>
</feature>
<feature type="binding site" evidence="1">
    <location>
        <position position="157"/>
    </location>
    <ligand>
        <name>ATP</name>
        <dbReference type="ChEBI" id="CHEBI:30616"/>
    </ligand>
</feature>
<feature type="binding site" evidence="1">
    <location>
        <position position="162"/>
    </location>
    <ligand>
        <name>ATP</name>
        <dbReference type="ChEBI" id="CHEBI:30616"/>
    </ligand>
</feature>
<feature type="binding site" evidence="1">
    <location>
        <position position="162"/>
    </location>
    <ligand>
        <name>Mg(2+)</name>
        <dbReference type="ChEBI" id="CHEBI:18420"/>
    </ligand>
</feature>
<feature type="binding site" evidence="1">
    <location>
        <position position="195"/>
    </location>
    <ligand>
        <name>ATP</name>
        <dbReference type="ChEBI" id="CHEBI:30616"/>
    </ligand>
</feature>
<feature type="binding site" evidence="1">
    <location>
        <begin position="221"/>
        <end position="224"/>
    </location>
    <ligand>
        <name>ATP</name>
        <dbReference type="ChEBI" id="CHEBI:30616"/>
    </ligand>
</feature>
<feature type="binding site" evidence="1">
    <location>
        <position position="231"/>
    </location>
    <ligand>
        <name>ATP</name>
        <dbReference type="ChEBI" id="CHEBI:30616"/>
    </ligand>
</feature>
<feature type="binding site" evidence="1">
    <location>
        <position position="233"/>
    </location>
    <ligand>
        <name>substrate</name>
    </ligand>
</feature>
<name>PDXK_ECO8A</name>
<dbReference type="EC" id="2.7.1.35" evidence="1"/>
<dbReference type="EMBL" id="CU928160">
    <property type="protein sequence ID" value="CAQ99316.1"/>
    <property type="molecule type" value="Genomic_DNA"/>
</dbReference>
<dbReference type="RefSeq" id="WP_000096660.1">
    <property type="nucleotide sequence ID" value="NC_011741.1"/>
</dbReference>
<dbReference type="SMR" id="B7M6S8"/>
<dbReference type="GeneID" id="93774712"/>
<dbReference type="KEGG" id="ecr:ECIAI1_2476"/>
<dbReference type="HOGENOM" id="CLU_046496_3_1_6"/>
<dbReference type="UniPathway" id="UPA01068">
    <property type="reaction ID" value="UER00298"/>
</dbReference>
<dbReference type="UniPathway" id="UPA01068">
    <property type="reaction ID" value="UER00299"/>
</dbReference>
<dbReference type="UniPathway" id="UPA01068">
    <property type="reaction ID" value="UER00300"/>
</dbReference>
<dbReference type="GO" id="GO:0005829">
    <property type="term" value="C:cytosol"/>
    <property type="evidence" value="ECO:0007669"/>
    <property type="project" value="TreeGrafter"/>
</dbReference>
<dbReference type="GO" id="GO:0005524">
    <property type="term" value="F:ATP binding"/>
    <property type="evidence" value="ECO:0007669"/>
    <property type="project" value="UniProtKB-UniRule"/>
</dbReference>
<dbReference type="GO" id="GO:0008902">
    <property type="term" value="F:hydroxymethylpyrimidine kinase activity"/>
    <property type="evidence" value="ECO:0007669"/>
    <property type="project" value="TreeGrafter"/>
</dbReference>
<dbReference type="GO" id="GO:0000287">
    <property type="term" value="F:magnesium ion binding"/>
    <property type="evidence" value="ECO:0007669"/>
    <property type="project" value="UniProtKB-UniRule"/>
</dbReference>
<dbReference type="GO" id="GO:0008478">
    <property type="term" value="F:pyridoxal kinase activity"/>
    <property type="evidence" value="ECO:0007669"/>
    <property type="project" value="UniProtKB-UniRule"/>
</dbReference>
<dbReference type="GO" id="GO:0008270">
    <property type="term" value="F:zinc ion binding"/>
    <property type="evidence" value="ECO:0007669"/>
    <property type="project" value="UniProtKB-UniRule"/>
</dbReference>
<dbReference type="GO" id="GO:0009443">
    <property type="term" value="P:pyridoxal 5'-phosphate salvage"/>
    <property type="evidence" value="ECO:0007669"/>
    <property type="project" value="UniProtKB-UniRule"/>
</dbReference>
<dbReference type="CDD" id="cd01173">
    <property type="entry name" value="pyridoxal_pyridoxamine_kinase"/>
    <property type="match status" value="1"/>
</dbReference>
<dbReference type="FunFam" id="3.40.1190.20:FF:000009">
    <property type="entry name" value="Pyridoxine/pyridoxal/pyridoxamine kinase"/>
    <property type="match status" value="1"/>
</dbReference>
<dbReference type="Gene3D" id="3.40.1190.20">
    <property type="match status" value="1"/>
</dbReference>
<dbReference type="HAMAP" id="MF_01638">
    <property type="entry name" value="PdxK"/>
    <property type="match status" value="1"/>
</dbReference>
<dbReference type="InterPro" id="IPR023479">
    <property type="entry name" value="PdxK"/>
</dbReference>
<dbReference type="InterPro" id="IPR013749">
    <property type="entry name" value="PM/HMP-P_kinase-1"/>
</dbReference>
<dbReference type="InterPro" id="IPR004625">
    <property type="entry name" value="PyrdxlKinase"/>
</dbReference>
<dbReference type="InterPro" id="IPR029056">
    <property type="entry name" value="Ribokinase-like"/>
</dbReference>
<dbReference type="NCBIfam" id="NF006034">
    <property type="entry name" value="PRK08176.1"/>
    <property type="match status" value="1"/>
</dbReference>
<dbReference type="NCBIfam" id="TIGR00687">
    <property type="entry name" value="pyridox_kin"/>
    <property type="match status" value="1"/>
</dbReference>
<dbReference type="PANTHER" id="PTHR10534">
    <property type="entry name" value="PYRIDOXAL KINASE"/>
    <property type="match status" value="1"/>
</dbReference>
<dbReference type="PANTHER" id="PTHR10534:SF15">
    <property type="entry name" value="PYRIDOXINE_PYRIDOXAL_PYRIDOXAMINE KINASE"/>
    <property type="match status" value="1"/>
</dbReference>
<dbReference type="Pfam" id="PF08543">
    <property type="entry name" value="Phos_pyr_kin"/>
    <property type="match status" value="1"/>
</dbReference>
<dbReference type="SUPFAM" id="SSF53613">
    <property type="entry name" value="Ribokinase-like"/>
    <property type="match status" value="1"/>
</dbReference>
<protein>
    <recommendedName>
        <fullName evidence="1">Pyridoxine/pyridoxal/pyridoxamine kinase</fullName>
        <shortName evidence="1">PN/PL/PM kinase</shortName>
        <ecNumber evidence="1">2.7.1.35</ecNumber>
    </recommendedName>
    <alternativeName>
        <fullName evidence="1">B6-vitamer kinase</fullName>
    </alternativeName>
</protein>
<evidence type="ECO:0000255" key="1">
    <source>
        <dbReference type="HAMAP-Rule" id="MF_01638"/>
    </source>
</evidence>
<organism>
    <name type="scientific">Escherichia coli O8 (strain IAI1)</name>
    <dbReference type="NCBI Taxonomy" id="585034"/>
    <lineage>
        <taxon>Bacteria</taxon>
        <taxon>Pseudomonadati</taxon>
        <taxon>Pseudomonadota</taxon>
        <taxon>Gammaproteobacteria</taxon>
        <taxon>Enterobacterales</taxon>
        <taxon>Enterobacteriaceae</taxon>
        <taxon>Escherichia</taxon>
    </lineage>
</organism>
<gene>
    <name evidence="1" type="primary">pdxK</name>
    <name type="ordered locus">ECIAI1_2476</name>
</gene>
<keyword id="KW-0067">ATP-binding</keyword>
<keyword id="KW-0418">Kinase</keyword>
<keyword id="KW-0460">Magnesium</keyword>
<keyword id="KW-0479">Metal-binding</keyword>
<keyword id="KW-0547">Nucleotide-binding</keyword>
<keyword id="KW-0808">Transferase</keyword>
<keyword id="KW-0862">Zinc</keyword>
<sequence>MSSLLLFNDKSRALQADIVAVQSQVVYGSVGNSIAVPAIKQNGLNVFAVPTVLLSNTPHYDTFYGGAIPDEWFSGYLRALQERDALRQLRAVTTGYMGTASQIKILAEWLTALRKDHPDLLIMVDPVIGDIDSGIYVKPDLPEAYRQYLLPLAQGITPNIFELEILTGKNCRDLDSAIAAAKSLLSDTLKWVVITSASGNEENQEMQVVVVSADSVNVISHSRVKTDLKGTGDLFCAQLISGLLKGKALNDAVHRAGLRVLEVMRYTQQHESDELILPPLAEA</sequence>
<accession>B7M6S8</accession>